<organism>
    <name type="scientific">Bos indicus</name>
    <name type="common">Zebu</name>
    <dbReference type="NCBI Taxonomy" id="9915"/>
    <lineage>
        <taxon>Eukaryota</taxon>
        <taxon>Metazoa</taxon>
        <taxon>Chordata</taxon>
        <taxon>Craniata</taxon>
        <taxon>Vertebrata</taxon>
        <taxon>Euteleostomi</taxon>
        <taxon>Mammalia</taxon>
        <taxon>Eutheria</taxon>
        <taxon>Laurasiatheria</taxon>
        <taxon>Artiodactyla</taxon>
        <taxon>Ruminantia</taxon>
        <taxon>Pecora</taxon>
        <taxon>Bovidae</taxon>
        <taxon>Bovinae</taxon>
        <taxon>Bos</taxon>
    </lineage>
</organism>
<comment type="function">
    <text evidence="1">Core subunit of the mitochondrial membrane respiratory chain NADH dehydrogenase (Complex I) which catalyzes electron transfer from NADH through the respiratory chain, using ubiquinone as an electron acceptor. Essential for the catalytic activity of complex I.</text>
</comment>
<comment type="catalytic activity">
    <reaction evidence="1">
        <text>a ubiquinone + NADH + 5 H(+)(in) = a ubiquinol + NAD(+) + 4 H(+)(out)</text>
        <dbReference type="Rhea" id="RHEA:29091"/>
        <dbReference type="Rhea" id="RHEA-COMP:9565"/>
        <dbReference type="Rhea" id="RHEA-COMP:9566"/>
        <dbReference type="ChEBI" id="CHEBI:15378"/>
        <dbReference type="ChEBI" id="CHEBI:16389"/>
        <dbReference type="ChEBI" id="CHEBI:17976"/>
        <dbReference type="ChEBI" id="CHEBI:57540"/>
        <dbReference type="ChEBI" id="CHEBI:57945"/>
        <dbReference type="EC" id="7.1.1.2"/>
    </reaction>
</comment>
<comment type="subunit">
    <text evidence="1">Core subunit of respiratory chain NADH dehydrogenase (Complex I) which is composed of 45 different subunits. Interacts with TMEM186. Interacts with TMEM242 (By similarity).</text>
</comment>
<comment type="subcellular location">
    <subcellularLocation>
        <location evidence="2">Mitochondrion inner membrane</location>
        <topology evidence="3">Multi-pass membrane protein</topology>
    </subcellularLocation>
</comment>
<comment type="similarity">
    <text evidence="4">Belongs to the complex I subunit 3 family.</text>
</comment>
<keyword id="KW-0249">Electron transport</keyword>
<keyword id="KW-0472">Membrane</keyword>
<keyword id="KW-0496">Mitochondrion</keyword>
<keyword id="KW-0999">Mitochondrion inner membrane</keyword>
<keyword id="KW-0520">NAD</keyword>
<keyword id="KW-1185">Reference proteome</keyword>
<keyword id="KW-0679">Respiratory chain</keyword>
<keyword id="KW-1278">Translocase</keyword>
<keyword id="KW-0812">Transmembrane</keyword>
<keyword id="KW-1133">Transmembrane helix</keyword>
<keyword id="KW-0813">Transport</keyword>
<keyword id="KW-0830">Ubiquinone</keyword>
<sequence length="115" mass="13085">MNLMLALLTNFTLATLLVIIAFWLPQLNVYSEKTSPYECGFDPMGSARLPFSMKFFLVAITFLLFDLEIALLLPLPWASQTTNLNTMLTMALFLIILLAVSLAYEWTQKGLEWTE</sequence>
<reference key="1">
    <citation type="journal article" date="2002" name="Genetics">
        <title>Coexistence of Bos taurus and B. indicus mitochondrial DNAs in nuclear transfer-derived somatic cattle clones.</title>
        <authorList>
            <person name="Steinborn R."/>
            <person name="Schinogl P."/>
            <person name="Wells D.N."/>
            <person name="Bergthaler A."/>
            <person name="Mueller M."/>
            <person name="Brem G."/>
        </authorList>
    </citation>
    <scope>NUCLEOTIDE SEQUENCE [GENOMIC DNA]</scope>
</reference>
<reference key="2">
    <citation type="submission" date="2002-03" db="EMBL/GenBank/DDBJ databases">
        <title>Complete sequence of the Bos indicus mitochondrial genome.</title>
        <authorList>
            <person name="Hiendleder S."/>
            <person name="Lewalski H."/>
            <person name="Wolf E."/>
        </authorList>
    </citation>
    <scope>NUCLEOTIDE SEQUENCE [GENOMIC DNA]</scope>
    <source>
        <tissue>Liver</tissue>
    </source>
</reference>
<reference key="3">
    <citation type="submission" date="2002-06" db="EMBL/GenBank/DDBJ databases">
        <title>The complete mitochondrial genome nucleotide sequence of Bos indicus.</title>
        <authorList>
            <person name="Miretti M.M."/>
            <person name="Pereira H.A. Jr."/>
            <person name="Greggio C."/>
            <person name="Suzuki J. Jr."/>
            <person name="Ferro J.A."/>
            <person name="Ferro M.I."/>
            <person name="Meirelles F."/>
            <person name="Garcia J.M."/>
            <person name="Smith L.C."/>
        </authorList>
    </citation>
    <scope>NUCLEOTIDE SEQUENCE [GENOMIC DNA]</scope>
</reference>
<proteinExistence type="inferred from homology"/>
<dbReference type="EC" id="7.1.1.2" evidence="1"/>
<dbReference type="EMBL" id="AY052631">
    <property type="protein sequence ID" value="AAL13335.1"/>
    <property type="molecule type" value="Genomic_DNA"/>
</dbReference>
<dbReference type="EMBL" id="AF492350">
    <property type="protein sequence ID" value="AAQ06587.1"/>
    <property type="molecule type" value="Genomic_DNA"/>
</dbReference>
<dbReference type="EMBL" id="AY126697">
    <property type="protein sequence ID" value="AAM95737.1"/>
    <property type="status" value="ALT_SEQ"/>
    <property type="molecule type" value="Genomic_DNA"/>
</dbReference>
<dbReference type="RefSeq" id="YP_052704.2">
    <property type="nucleotide sequence ID" value="NC_005971.1"/>
</dbReference>
<dbReference type="SMR" id="Q8WAB4"/>
<dbReference type="GeneID" id="2885978"/>
<dbReference type="KEGG" id="biu:2885978"/>
<dbReference type="CTD" id="4537"/>
<dbReference type="OrthoDB" id="17448at91561"/>
<dbReference type="Proteomes" id="UP000515132">
    <property type="component" value="Mitochondrion MT"/>
</dbReference>
<dbReference type="GO" id="GO:0005743">
    <property type="term" value="C:mitochondrial inner membrane"/>
    <property type="evidence" value="ECO:0000250"/>
    <property type="project" value="UniProtKB"/>
</dbReference>
<dbReference type="GO" id="GO:0030964">
    <property type="term" value="C:NADH dehydrogenase complex"/>
    <property type="evidence" value="ECO:0007669"/>
    <property type="project" value="TreeGrafter"/>
</dbReference>
<dbReference type="GO" id="GO:0008137">
    <property type="term" value="F:NADH dehydrogenase (ubiquinone) activity"/>
    <property type="evidence" value="ECO:0000250"/>
    <property type="project" value="UniProtKB"/>
</dbReference>
<dbReference type="GO" id="GO:0006120">
    <property type="term" value="P:mitochondrial electron transport, NADH to ubiquinone"/>
    <property type="evidence" value="ECO:0000250"/>
    <property type="project" value="UniProtKB"/>
</dbReference>
<dbReference type="FunFam" id="1.20.58.1610:FF:000004">
    <property type="entry name" value="NADH-quinone oxidoreductase subunit A"/>
    <property type="match status" value="1"/>
</dbReference>
<dbReference type="Gene3D" id="1.20.58.1610">
    <property type="entry name" value="NADH:ubiquinone/plastoquinone oxidoreductase, chain 3"/>
    <property type="match status" value="1"/>
</dbReference>
<dbReference type="InterPro" id="IPR000440">
    <property type="entry name" value="NADH_UbQ/plastoQ_OxRdtase_su3"/>
</dbReference>
<dbReference type="InterPro" id="IPR038430">
    <property type="entry name" value="NDAH_ubi_oxred_su3_sf"/>
</dbReference>
<dbReference type="PANTHER" id="PTHR11058">
    <property type="entry name" value="NADH-UBIQUINONE OXIDOREDUCTASE CHAIN 3"/>
    <property type="match status" value="1"/>
</dbReference>
<dbReference type="PANTHER" id="PTHR11058:SF9">
    <property type="entry name" value="NADH-UBIQUINONE OXIDOREDUCTASE CHAIN 3"/>
    <property type="match status" value="1"/>
</dbReference>
<dbReference type="Pfam" id="PF00507">
    <property type="entry name" value="Oxidored_q4"/>
    <property type="match status" value="1"/>
</dbReference>
<protein>
    <recommendedName>
        <fullName evidence="1">NADH-ubiquinone oxidoreductase chain 3</fullName>
        <ecNumber evidence="1">7.1.1.2</ecNumber>
    </recommendedName>
    <alternativeName>
        <fullName>NADH dehydrogenase subunit 3</fullName>
    </alternativeName>
</protein>
<feature type="chain" id="PRO_0000253518" description="NADH-ubiquinone oxidoreductase chain 3">
    <location>
        <begin position="1"/>
        <end position="115"/>
    </location>
</feature>
<feature type="transmembrane region" description="Helical" evidence="3">
    <location>
        <begin position="3"/>
        <end position="23"/>
    </location>
</feature>
<feature type="transmembrane region" description="Helical" evidence="3">
    <location>
        <begin position="55"/>
        <end position="75"/>
    </location>
</feature>
<feature type="transmembrane region" description="Helical" evidence="3">
    <location>
        <begin position="84"/>
        <end position="104"/>
    </location>
</feature>
<geneLocation type="mitochondrion"/>
<gene>
    <name evidence="1" type="primary">MT-ND3</name>
    <name type="synonym">MTND3</name>
    <name type="synonym">NADH3</name>
    <name type="synonym">ND3</name>
</gene>
<name>NU3M_BOSIN</name>
<evidence type="ECO:0000250" key="1">
    <source>
        <dbReference type="UniProtKB" id="P03897"/>
    </source>
</evidence>
<evidence type="ECO:0000250" key="2">
    <source>
        <dbReference type="UniProtKB" id="P03898"/>
    </source>
</evidence>
<evidence type="ECO:0000255" key="3"/>
<evidence type="ECO:0000305" key="4"/>
<accession>Q8WAB4</accession>
<accession>Q6EMS4</accession>